<organism>
    <name type="scientific">Methanothrix thermoacetophila (strain DSM 6194 / JCM 14653 / NBRC 101360 / PT)</name>
    <name type="common">Methanosaeta thermophila</name>
    <dbReference type="NCBI Taxonomy" id="349307"/>
    <lineage>
        <taxon>Archaea</taxon>
        <taxon>Methanobacteriati</taxon>
        <taxon>Methanobacteriota</taxon>
        <taxon>Stenosarchaea group</taxon>
        <taxon>Methanomicrobia</taxon>
        <taxon>Methanotrichales</taxon>
        <taxon>Methanotrichaceae</taxon>
        <taxon>Methanothrix</taxon>
    </lineage>
</organism>
<sequence length="61" mass="7309">MIPVRCFSCGKVISSVWEEYRERIKSEPPGKVMDDLGIERYCCRRMLLSHVEVVEMLRRYQ</sequence>
<gene>
    <name evidence="1" type="primary">rpo10</name>
    <name evidence="1" type="synonym">rpoN</name>
    <name type="ordered locus">Mthe_0480</name>
</gene>
<dbReference type="EC" id="2.7.7.6" evidence="1"/>
<dbReference type="EMBL" id="CP000477">
    <property type="protein sequence ID" value="ABK14271.1"/>
    <property type="molecule type" value="Genomic_DNA"/>
</dbReference>
<dbReference type="RefSeq" id="WP_011695669.1">
    <property type="nucleotide sequence ID" value="NC_008553.1"/>
</dbReference>
<dbReference type="SMR" id="A0B6E7"/>
<dbReference type="STRING" id="349307.Mthe_0480"/>
<dbReference type="GeneID" id="4463097"/>
<dbReference type="KEGG" id="mtp:Mthe_0480"/>
<dbReference type="HOGENOM" id="CLU_143122_2_1_2"/>
<dbReference type="OrthoDB" id="371754at2157"/>
<dbReference type="Proteomes" id="UP000000674">
    <property type="component" value="Chromosome"/>
</dbReference>
<dbReference type="GO" id="GO:0005737">
    <property type="term" value="C:cytoplasm"/>
    <property type="evidence" value="ECO:0007669"/>
    <property type="project" value="UniProtKB-SubCell"/>
</dbReference>
<dbReference type="GO" id="GO:0000428">
    <property type="term" value="C:DNA-directed RNA polymerase complex"/>
    <property type="evidence" value="ECO:0007669"/>
    <property type="project" value="UniProtKB-KW"/>
</dbReference>
<dbReference type="GO" id="GO:0003677">
    <property type="term" value="F:DNA binding"/>
    <property type="evidence" value="ECO:0007669"/>
    <property type="project" value="InterPro"/>
</dbReference>
<dbReference type="GO" id="GO:0003899">
    <property type="term" value="F:DNA-directed RNA polymerase activity"/>
    <property type="evidence" value="ECO:0007669"/>
    <property type="project" value="UniProtKB-UniRule"/>
</dbReference>
<dbReference type="GO" id="GO:0008270">
    <property type="term" value="F:zinc ion binding"/>
    <property type="evidence" value="ECO:0007669"/>
    <property type="project" value="UniProtKB-UniRule"/>
</dbReference>
<dbReference type="GO" id="GO:0006351">
    <property type="term" value="P:DNA-templated transcription"/>
    <property type="evidence" value="ECO:0007669"/>
    <property type="project" value="UniProtKB-UniRule"/>
</dbReference>
<dbReference type="FunFam" id="1.10.10.60:FF:000024">
    <property type="entry name" value="DNA-directed RNA polymerases I, II, and III subunit"/>
    <property type="match status" value="1"/>
</dbReference>
<dbReference type="Gene3D" id="1.10.10.60">
    <property type="entry name" value="Homeodomain-like"/>
    <property type="match status" value="1"/>
</dbReference>
<dbReference type="HAMAP" id="MF_00250">
    <property type="entry name" value="RNApol_arch_Rpo10"/>
    <property type="match status" value="1"/>
</dbReference>
<dbReference type="InterPro" id="IPR023580">
    <property type="entry name" value="RNA_pol_su_RPB10"/>
</dbReference>
<dbReference type="InterPro" id="IPR020789">
    <property type="entry name" value="RNA_pol_suN_Zn-BS"/>
</dbReference>
<dbReference type="InterPro" id="IPR000268">
    <property type="entry name" value="RPABC5/Rpb10"/>
</dbReference>
<dbReference type="NCBIfam" id="NF003089">
    <property type="entry name" value="PRK04016.1"/>
    <property type="match status" value="1"/>
</dbReference>
<dbReference type="PANTHER" id="PTHR23431:SF3">
    <property type="entry name" value="DNA-DIRECTED RNA POLYMERASES I, II, AND III SUBUNIT RPABC5"/>
    <property type="match status" value="1"/>
</dbReference>
<dbReference type="PANTHER" id="PTHR23431">
    <property type="entry name" value="DNA-DIRECTED RNA POLYMERASES I, II, AND III SUBUNIT RPABC5 FAMILY MEMBER"/>
    <property type="match status" value="1"/>
</dbReference>
<dbReference type="Pfam" id="PF01194">
    <property type="entry name" value="RNA_pol_N"/>
    <property type="match status" value="1"/>
</dbReference>
<dbReference type="PIRSF" id="PIRSF005653">
    <property type="entry name" value="RNA_pol_N/8_sub"/>
    <property type="match status" value="1"/>
</dbReference>
<dbReference type="SUPFAM" id="SSF46924">
    <property type="entry name" value="RNA polymerase subunit RPB10"/>
    <property type="match status" value="1"/>
</dbReference>
<dbReference type="PROSITE" id="PS01112">
    <property type="entry name" value="RNA_POL_N_8KD"/>
    <property type="match status" value="1"/>
</dbReference>
<comment type="function">
    <text evidence="1">DNA-dependent RNA polymerase (RNAP) catalyzes the transcription of DNA into RNA using the four ribonucleoside triphosphates as substrates.</text>
</comment>
<comment type="catalytic activity">
    <reaction evidence="1">
        <text>RNA(n) + a ribonucleoside 5'-triphosphate = RNA(n+1) + diphosphate</text>
        <dbReference type="Rhea" id="RHEA:21248"/>
        <dbReference type="Rhea" id="RHEA-COMP:14527"/>
        <dbReference type="Rhea" id="RHEA-COMP:17342"/>
        <dbReference type="ChEBI" id="CHEBI:33019"/>
        <dbReference type="ChEBI" id="CHEBI:61557"/>
        <dbReference type="ChEBI" id="CHEBI:140395"/>
        <dbReference type="EC" id="2.7.7.6"/>
    </reaction>
</comment>
<comment type="cofactor">
    <cofactor evidence="1">
        <name>Zn(2+)</name>
        <dbReference type="ChEBI" id="CHEBI:29105"/>
    </cofactor>
    <text evidence="1">Binds 1 zinc ion.</text>
</comment>
<comment type="subunit">
    <text evidence="1">Part of the RNA polymerase complex.</text>
</comment>
<comment type="subcellular location">
    <subcellularLocation>
        <location evidence="1">Cytoplasm</location>
    </subcellularLocation>
</comment>
<comment type="similarity">
    <text evidence="1">Belongs to the archaeal Rpo10/eukaryotic RPB10 RNA polymerase subunit family.</text>
</comment>
<evidence type="ECO:0000255" key="1">
    <source>
        <dbReference type="HAMAP-Rule" id="MF_00250"/>
    </source>
</evidence>
<reference key="1">
    <citation type="submission" date="2006-10" db="EMBL/GenBank/DDBJ databases">
        <title>Complete sequence of Methanosaeta thermophila PT.</title>
        <authorList>
            <consortium name="US DOE Joint Genome Institute"/>
            <person name="Copeland A."/>
            <person name="Lucas S."/>
            <person name="Lapidus A."/>
            <person name="Barry K."/>
            <person name="Detter J.C."/>
            <person name="Glavina del Rio T."/>
            <person name="Hammon N."/>
            <person name="Israni S."/>
            <person name="Pitluck S."/>
            <person name="Chain P."/>
            <person name="Malfatti S."/>
            <person name="Shin M."/>
            <person name="Vergez L."/>
            <person name="Schmutz J."/>
            <person name="Larimer F."/>
            <person name="Land M."/>
            <person name="Hauser L."/>
            <person name="Kyrpides N."/>
            <person name="Kim E."/>
            <person name="Smith K.S."/>
            <person name="Ingram-Smith C."/>
            <person name="Richardson P."/>
        </authorList>
    </citation>
    <scope>NUCLEOTIDE SEQUENCE [LARGE SCALE GENOMIC DNA]</scope>
    <source>
        <strain>DSM 6194 / JCM 14653 / NBRC 101360 / PT</strain>
    </source>
</reference>
<keyword id="KW-0963">Cytoplasm</keyword>
<keyword id="KW-0240">DNA-directed RNA polymerase</keyword>
<keyword id="KW-0479">Metal-binding</keyword>
<keyword id="KW-0548">Nucleotidyltransferase</keyword>
<keyword id="KW-1185">Reference proteome</keyword>
<keyword id="KW-0804">Transcription</keyword>
<keyword id="KW-0808">Transferase</keyword>
<keyword id="KW-0862">Zinc</keyword>
<protein>
    <recommendedName>
        <fullName evidence="1">DNA-directed RNA polymerase subunit Rpo10</fullName>
        <ecNumber evidence="1">2.7.7.6</ecNumber>
    </recommendedName>
    <alternativeName>
        <fullName evidence="1">DNA-directed RNA polymerase subunit N</fullName>
    </alternativeName>
</protein>
<name>RPO10_METTP</name>
<proteinExistence type="inferred from homology"/>
<feature type="chain" id="PRO_0000304194" description="DNA-directed RNA polymerase subunit Rpo10">
    <location>
        <begin position="1"/>
        <end position="61"/>
    </location>
</feature>
<feature type="binding site" evidence="1">
    <location>
        <position position="6"/>
    </location>
    <ligand>
        <name>Zn(2+)</name>
        <dbReference type="ChEBI" id="CHEBI:29105"/>
    </ligand>
</feature>
<feature type="binding site" evidence="1">
    <location>
        <position position="9"/>
    </location>
    <ligand>
        <name>Zn(2+)</name>
        <dbReference type="ChEBI" id="CHEBI:29105"/>
    </ligand>
</feature>
<feature type="binding site" evidence="1">
    <location>
        <position position="42"/>
    </location>
    <ligand>
        <name>Zn(2+)</name>
        <dbReference type="ChEBI" id="CHEBI:29105"/>
    </ligand>
</feature>
<feature type="binding site" evidence="1">
    <location>
        <position position="43"/>
    </location>
    <ligand>
        <name>Zn(2+)</name>
        <dbReference type="ChEBI" id="CHEBI:29105"/>
    </ligand>
</feature>
<accession>A0B6E7</accession>